<evidence type="ECO:0000250" key="1"/>
<evidence type="ECO:0000255" key="2"/>
<evidence type="ECO:0000255" key="3">
    <source>
        <dbReference type="PROSITE-ProRule" id="PRU01070"/>
    </source>
</evidence>
<evidence type="ECO:0000305" key="4"/>
<reference key="1">
    <citation type="journal article" date="2002" name="FEMS Microbiol. Lett.">
        <title>Co-linear scaffold of the Bacillus licheniformis and Bacillus subtilis genomes and its use to compare their competence genes.</title>
        <authorList>
            <person name="Lapidus A."/>
            <person name="Galleron N."/>
            <person name="Andersen J.T."/>
            <person name="Joergensen P.L."/>
            <person name="Ehrlich S.D."/>
            <person name="Sorokin A."/>
        </authorList>
    </citation>
    <scope>NUCLEOTIDE SEQUENCE [GENOMIC DNA]</scope>
</reference>
<reference key="2">
    <citation type="journal article" date="2004" name="J. Mol. Microbiol. Biotechnol.">
        <title>The complete genome sequence of Bacillus licheniformis DSM13, an organism with great industrial potential.</title>
        <authorList>
            <person name="Veith B."/>
            <person name="Herzberg C."/>
            <person name="Steckel S."/>
            <person name="Feesche J."/>
            <person name="Maurer K.H."/>
            <person name="Ehrenreich P."/>
            <person name="Baeumer S."/>
            <person name="Henne A."/>
            <person name="Liesegang H."/>
            <person name="Merkl R."/>
            <person name="Ehrenreich A."/>
            <person name="Gottschalk G."/>
        </authorList>
    </citation>
    <scope>NUCLEOTIDE SEQUENCE [LARGE SCALE GENOMIC DNA]</scope>
    <source>
        <strain>ATCC 14580 / DSM 13 / JCM 2505 / CCUG 7422 / NBRC 12200 / NCIMB 9375 / NCTC 10341 / NRRL NRS-1264 / Gibson 46</strain>
    </source>
</reference>
<reference key="3">
    <citation type="journal article" date="2004" name="Genome Biol.">
        <title>Complete genome sequence of the industrial bacterium Bacillus licheniformis and comparisons with closely related Bacillus species.</title>
        <authorList>
            <person name="Rey M.W."/>
            <person name="Ramaiya P."/>
            <person name="Nelson B.A."/>
            <person name="Brody-Karpin S.D."/>
            <person name="Zaretsky E.J."/>
            <person name="Tang M."/>
            <person name="Lopez de Leon A."/>
            <person name="Xiang H."/>
            <person name="Gusti V."/>
            <person name="Clausen I.G."/>
            <person name="Olsen P.B."/>
            <person name="Rasmussen M.D."/>
            <person name="Andersen J.T."/>
            <person name="Joergensen P.L."/>
            <person name="Larsen T.S."/>
            <person name="Sorokin A."/>
            <person name="Bolotin A."/>
            <person name="Lapidus A."/>
            <person name="Galleron N."/>
            <person name="Ehrlich S.D."/>
            <person name="Berka R.M."/>
        </authorList>
    </citation>
    <scope>NUCLEOTIDE SEQUENCE [LARGE SCALE GENOMIC DNA]</scope>
    <source>
        <strain>ATCC 14580 / DSM 13 / JCM 2505 / CCUG 7422 / NBRC 12200 / NCIMB 9375 / NCTC 10341 / NRRL NRS-1264 / Gibson 46</strain>
    </source>
</reference>
<name>COMGC_BACLD</name>
<dbReference type="EMBL" id="AF459917">
    <property type="protein sequence ID" value="AAL67531.1"/>
    <property type="molecule type" value="Genomic_DNA"/>
</dbReference>
<dbReference type="EMBL" id="AE017333">
    <property type="protein sequence ID" value="AAU41520.1"/>
    <property type="molecule type" value="Genomic_DNA"/>
</dbReference>
<dbReference type="EMBL" id="CP000002">
    <property type="protein sequence ID" value="AAU24160.1"/>
    <property type="molecule type" value="Genomic_DNA"/>
</dbReference>
<dbReference type="RefSeq" id="WP_003183466.1">
    <property type="nucleotide sequence ID" value="NC_006322.1"/>
</dbReference>
<dbReference type="SMR" id="Q8VQ71"/>
<dbReference type="STRING" id="279010.BL01570"/>
<dbReference type="GeneID" id="92860760"/>
<dbReference type="KEGG" id="bld:BLi02646"/>
<dbReference type="KEGG" id="bli:BL01570"/>
<dbReference type="eggNOG" id="COG4537">
    <property type="taxonomic scope" value="Bacteria"/>
</dbReference>
<dbReference type="HOGENOM" id="CLU_091705_9_0_9"/>
<dbReference type="Proteomes" id="UP000000606">
    <property type="component" value="Chromosome"/>
</dbReference>
<dbReference type="GO" id="GO:0009986">
    <property type="term" value="C:cell surface"/>
    <property type="evidence" value="ECO:0007669"/>
    <property type="project" value="UniProtKB-SubCell"/>
</dbReference>
<dbReference type="GO" id="GO:0005886">
    <property type="term" value="C:plasma membrane"/>
    <property type="evidence" value="ECO:0007669"/>
    <property type="project" value="UniProtKB-SubCell"/>
</dbReference>
<dbReference type="GO" id="GO:0015627">
    <property type="term" value="C:type II protein secretion system complex"/>
    <property type="evidence" value="ECO:0007669"/>
    <property type="project" value="InterPro"/>
</dbReference>
<dbReference type="GO" id="GO:0030420">
    <property type="term" value="P:establishment of competence for transformation"/>
    <property type="evidence" value="ECO:0007669"/>
    <property type="project" value="UniProtKB-KW"/>
</dbReference>
<dbReference type="GO" id="GO:0015628">
    <property type="term" value="P:protein secretion by the type II secretion system"/>
    <property type="evidence" value="ECO:0007669"/>
    <property type="project" value="InterPro"/>
</dbReference>
<dbReference type="Gene3D" id="3.30.700.10">
    <property type="entry name" value="Glycoprotein, Type 4 Pilin"/>
    <property type="match status" value="1"/>
</dbReference>
<dbReference type="InterPro" id="IPR000983">
    <property type="entry name" value="Bac_GSPG_pilin"/>
</dbReference>
<dbReference type="InterPro" id="IPR016940">
    <property type="entry name" value="ComGC"/>
</dbReference>
<dbReference type="InterPro" id="IPR012902">
    <property type="entry name" value="N_methyl_site"/>
</dbReference>
<dbReference type="InterPro" id="IPR045584">
    <property type="entry name" value="Pilin-like"/>
</dbReference>
<dbReference type="NCBIfam" id="TIGR02532">
    <property type="entry name" value="IV_pilin_GFxxxE"/>
    <property type="match status" value="1"/>
</dbReference>
<dbReference type="NCBIfam" id="NF040999">
    <property type="entry name" value="pilin_ComGC"/>
    <property type="match status" value="1"/>
</dbReference>
<dbReference type="Pfam" id="PF07963">
    <property type="entry name" value="N_methyl"/>
    <property type="match status" value="1"/>
</dbReference>
<dbReference type="PIRSF" id="PIRSF029928">
    <property type="entry name" value="Late_competence_ComGC"/>
    <property type="match status" value="1"/>
</dbReference>
<dbReference type="PRINTS" id="PR00813">
    <property type="entry name" value="BCTERIALGSPG"/>
</dbReference>
<dbReference type="SUPFAM" id="SSF54523">
    <property type="entry name" value="Pili subunits"/>
    <property type="match status" value="1"/>
</dbReference>
<dbReference type="PROSITE" id="PS00409">
    <property type="entry name" value="PROKAR_NTER_METHYL"/>
    <property type="match status" value="1"/>
</dbReference>
<organism>
    <name type="scientific">Bacillus licheniformis (strain ATCC 14580 / DSM 13 / JCM 2505 / CCUG 7422 / NBRC 12200 / NCIMB 9375 / NCTC 10341 / NRRL NRS-1264 / Gibson 46)</name>
    <dbReference type="NCBI Taxonomy" id="279010"/>
    <lineage>
        <taxon>Bacteria</taxon>
        <taxon>Bacillati</taxon>
        <taxon>Bacillota</taxon>
        <taxon>Bacilli</taxon>
        <taxon>Bacillales</taxon>
        <taxon>Bacillaceae</taxon>
        <taxon>Bacillus</taxon>
    </lineage>
</organism>
<sequence>MNEKGFTLIEMLVVMLVISILLLITIPNVTKHNQSIQKKGCEGLINMVQAQITAYQMDHDGKTPNRAELESEGYIKKNLKCPNGKAIKISNGKAQAD</sequence>
<accession>Q8VQ71</accession>
<accession>Q65HE4</accession>
<feature type="propeptide" id="PRO_0000024264" description="Leader sequence" evidence="3">
    <location>
        <begin position="1"/>
        <end position="5"/>
    </location>
</feature>
<feature type="chain" id="PRO_0000024265" description="ComG operon protein 3 homolog">
    <location>
        <begin position="6"/>
        <end position="97"/>
    </location>
</feature>
<feature type="transmembrane region" description="Helical" evidence="2">
    <location>
        <begin position="6"/>
        <end position="26"/>
    </location>
</feature>
<feature type="modified residue" description="N-methylphenylalanine" evidence="3">
    <location>
        <position position="6"/>
    </location>
</feature>
<feature type="disulfide bond" evidence="1">
    <location>
        <begin position="41"/>
        <end position="81"/>
    </location>
</feature>
<proteinExistence type="inferred from homology"/>
<keyword id="KW-1003">Cell membrane</keyword>
<keyword id="KW-0178">Competence</keyword>
<keyword id="KW-1015">Disulfide bond</keyword>
<keyword id="KW-0472">Membrane</keyword>
<keyword id="KW-0488">Methylation</keyword>
<keyword id="KW-1185">Reference proteome</keyword>
<keyword id="KW-0812">Transmembrane</keyword>
<keyword id="KW-1133">Transmembrane helix</keyword>
<keyword id="KW-0813">Transport</keyword>
<protein>
    <recommendedName>
        <fullName>ComG operon protein 3 homolog</fullName>
    </recommendedName>
    <alternativeName>
        <fullName>Late competence protein ComGC</fullName>
    </alternativeName>
</protein>
<comment type="function">
    <text evidence="1">Required for transformation and DNA binding.</text>
</comment>
<comment type="subunit">
    <text evidence="1">Homodimer.</text>
</comment>
<comment type="subcellular location">
    <subcellularLocation>
        <location>Cell membrane</location>
        <topology>Single-pass membrane protein</topology>
    </subcellularLocation>
    <subcellularLocation>
        <location>Cell surface</location>
    </subcellularLocation>
    <text evidence="1">The unprocessed form is an integral membrane protein with its C-terminus outside the membrane. Upon cleavage, it is translocated to the outer face of the membrane (By similarity).</text>
</comment>
<comment type="similarity">
    <text evidence="4">Belongs to the ComGC family.</text>
</comment>
<gene>
    <name type="primary">comGC</name>
    <name type="ordered locus">BLi02646</name>
    <name type="ordered locus">BL01570</name>
</gene>